<feature type="chain" id="PRO_1000195724" description="Large ribosomal subunit protein uL11">
    <location>
        <begin position="1"/>
        <end position="141"/>
    </location>
</feature>
<name>RL11_STRPS</name>
<keyword id="KW-0488">Methylation</keyword>
<keyword id="KW-0687">Ribonucleoprotein</keyword>
<keyword id="KW-0689">Ribosomal protein</keyword>
<keyword id="KW-0694">RNA-binding</keyword>
<keyword id="KW-0699">rRNA-binding</keyword>
<evidence type="ECO:0000255" key="1">
    <source>
        <dbReference type="HAMAP-Rule" id="MF_00736"/>
    </source>
</evidence>
<evidence type="ECO:0000305" key="2"/>
<protein>
    <recommendedName>
        <fullName evidence="1">Large ribosomal subunit protein uL11</fullName>
    </recommendedName>
    <alternativeName>
        <fullName evidence="2">50S ribosomal protein L11</fullName>
    </alternativeName>
</protein>
<sequence length="141" mass="14800">MAKKVEKLVKLQIPAGKATPAPPVGPALGQAGINIMGFTKEFNARTADQAGMIIPVVISVYEDKSFTFVTKTPPAAVLLKKAAGVEKGSGTPNKTKVATVTRAQVQEIAETKMPDLNAANVESAMRMIEGTARSMGFTVVD</sequence>
<reference key="1">
    <citation type="journal article" date="2009" name="BMC Genomics">
        <title>Genome evolution driven by host adaptations results in a more virulent and antimicrobial-resistant Streptococcus pneumoniae serotype 14.</title>
        <authorList>
            <person name="Ding F."/>
            <person name="Tang P."/>
            <person name="Hsu M.-H."/>
            <person name="Cui P."/>
            <person name="Hu S."/>
            <person name="Yu J."/>
            <person name="Chiu C.-H."/>
        </authorList>
    </citation>
    <scope>NUCLEOTIDE SEQUENCE [LARGE SCALE GENOMIC DNA]</scope>
    <source>
        <strain>CGSP14</strain>
    </source>
</reference>
<organism>
    <name type="scientific">Streptococcus pneumoniae (strain CGSP14)</name>
    <dbReference type="NCBI Taxonomy" id="516950"/>
    <lineage>
        <taxon>Bacteria</taxon>
        <taxon>Bacillati</taxon>
        <taxon>Bacillota</taxon>
        <taxon>Bacilli</taxon>
        <taxon>Lactobacillales</taxon>
        <taxon>Streptococcaceae</taxon>
        <taxon>Streptococcus</taxon>
    </lineage>
</organism>
<dbReference type="EMBL" id="CP001033">
    <property type="protein sequence ID" value="ACB89843.1"/>
    <property type="molecule type" value="Genomic_DNA"/>
</dbReference>
<dbReference type="RefSeq" id="WP_001085809.1">
    <property type="nucleotide sequence ID" value="NC_010582.1"/>
</dbReference>
<dbReference type="SMR" id="B2IMU7"/>
<dbReference type="GeneID" id="93739230"/>
<dbReference type="KEGG" id="spw:SPCG_0591"/>
<dbReference type="HOGENOM" id="CLU_074237_2_1_9"/>
<dbReference type="GO" id="GO:0022625">
    <property type="term" value="C:cytosolic large ribosomal subunit"/>
    <property type="evidence" value="ECO:0007669"/>
    <property type="project" value="TreeGrafter"/>
</dbReference>
<dbReference type="GO" id="GO:0070180">
    <property type="term" value="F:large ribosomal subunit rRNA binding"/>
    <property type="evidence" value="ECO:0007669"/>
    <property type="project" value="UniProtKB-UniRule"/>
</dbReference>
<dbReference type="GO" id="GO:0003735">
    <property type="term" value="F:structural constituent of ribosome"/>
    <property type="evidence" value="ECO:0007669"/>
    <property type="project" value="InterPro"/>
</dbReference>
<dbReference type="GO" id="GO:0006412">
    <property type="term" value="P:translation"/>
    <property type="evidence" value="ECO:0007669"/>
    <property type="project" value="UniProtKB-UniRule"/>
</dbReference>
<dbReference type="CDD" id="cd00349">
    <property type="entry name" value="Ribosomal_L11"/>
    <property type="match status" value="1"/>
</dbReference>
<dbReference type="FunFam" id="1.10.10.250:FF:000001">
    <property type="entry name" value="50S ribosomal protein L11"/>
    <property type="match status" value="1"/>
</dbReference>
<dbReference type="FunFam" id="3.30.1550.10:FF:000001">
    <property type="entry name" value="50S ribosomal protein L11"/>
    <property type="match status" value="1"/>
</dbReference>
<dbReference type="Gene3D" id="1.10.10.250">
    <property type="entry name" value="Ribosomal protein L11, C-terminal domain"/>
    <property type="match status" value="1"/>
</dbReference>
<dbReference type="Gene3D" id="3.30.1550.10">
    <property type="entry name" value="Ribosomal protein L11/L12, N-terminal domain"/>
    <property type="match status" value="1"/>
</dbReference>
<dbReference type="HAMAP" id="MF_00736">
    <property type="entry name" value="Ribosomal_uL11"/>
    <property type="match status" value="1"/>
</dbReference>
<dbReference type="InterPro" id="IPR000911">
    <property type="entry name" value="Ribosomal_uL11"/>
</dbReference>
<dbReference type="InterPro" id="IPR006519">
    <property type="entry name" value="Ribosomal_uL11_bac-typ"/>
</dbReference>
<dbReference type="InterPro" id="IPR020783">
    <property type="entry name" value="Ribosomal_uL11_C"/>
</dbReference>
<dbReference type="InterPro" id="IPR036769">
    <property type="entry name" value="Ribosomal_uL11_C_sf"/>
</dbReference>
<dbReference type="InterPro" id="IPR020785">
    <property type="entry name" value="Ribosomal_uL11_CS"/>
</dbReference>
<dbReference type="InterPro" id="IPR020784">
    <property type="entry name" value="Ribosomal_uL11_N"/>
</dbReference>
<dbReference type="InterPro" id="IPR036796">
    <property type="entry name" value="Ribosomal_uL11_N_sf"/>
</dbReference>
<dbReference type="NCBIfam" id="TIGR01632">
    <property type="entry name" value="L11_bact"/>
    <property type="match status" value="1"/>
</dbReference>
<dbReference type="PANTHER" id="PTHR11661">
    <property type="entry name" value="60S RIBOSOMAL PROTEIN L12"/>
    <property type="match status" value="1"/>
</dbReference>
<dbReference type="PANTHER" id="PTHR11661:SF1">
    <property type="entry name" value="LARGE RIBOSOMAL SUBUNIT PROTEIN UL11M"/>
    <property type="match status" value="1"/>
</dbReference>
<dbReference type="Pfam" id="PF00298">
    <property type="entry name" value="Ribosomal_L11"/>
    <property type="match status" value="1"/>
</dbReference>
<dbReference type="Pfam" id="PF03946">
    <property type="entry name" value="Ribosomal_L11_N"/>
    <property type="match status" value="1"/>
</dbReference>
<dbReference type="SMART" id="SM00649">
    <property type="entry name" value="RL11"/>
    <property type="match status" value="1"/>
</dbReference>
<dbReference type="SUPFAM" id="SSF54747">
    <property type="entry name" value="Ribosomal L11/L12e N-terminal domain"/>
    <property type="match status" value="1"/>
</dbReference>
<dbReference type="SUPFAM" id="SSF46906">
    <property type="entry name" value="Ribosomal protein L11, C-terminal domain"/>
    <property type="match status" value="1"/>
</dbReference>
<dbReference type="PROSITE" id="PS00359">
    <property type="entry name" value="RIBOSOMAL_L11"/>
    <property type="match status" value="1"/>
</dbReference>
<gene>
    <name evidence="1" type="primary">rplK</name>
    <name type="ordered locus">SPCG_0591</name>
</gene>
<accession>B2IMU7</accession>
<proteinExistence type="inferred from homology"/>
<comment type="function">
    <text evidence="1">Forms part of the ribosomal stalk which helps the ribosome interact with GTP-bound translation factors.</text>
</comment>
<comment type="subunit">
    <text evidence="1">Part of the ribosomal stalk of the 50S ribosomal subunit. Interacts with L10 and the large rRNA to form the base of the stalk. L10 forms an elongated spine to which L12 dimers bind in a sequential fashion forming a multimeric L10(L12)X complex.</text>
</comment>
<comment type="PTM">
    <text evidence="1">One or more lysine residues are methylated.</text>
</comment>
<comment type="similarity">
    <text evidence="1">Belongs to the universal ribosomal protein uL11 family.</text>
</comment>